<comment type="function">
    <text evidence="1">Catalyzes the phosphorylation of the position 2 hydroxy group of 4-diphosphocytidyl-2C-methyl-D-erythritol.</text>
</comment>
<comment type="catalytic activity">
    <reaction evidence="1">
        <text>4-CDP-2-C-methyl-D-erythritol + ATP = 4-CDP-2-C-methyl-D-erythritol 2-phosphate + ADP + H(+)</text>
        <dbReference type="Rhea" id="RHEA:18437"/>
        <dbReference type="ChEBI" id="CHEBI:15378"/>
        <dbReference type="ChEBI" id="CHEBI:30616"/>
        <dbReference type="ChEBI" id="CHEBI:57823"/>
        <dbReference type="ChEBI" id="CHEBI:57919"/>
        <dbReference type="ChEBI" id="CHEBI:456216"/>
        <dbReference type="EC" id="2.7.1.148"/>
    </reaction>
</comment>
<comment type="pathway">
    <text evidence="1">Isoprenoid biosynthesis; isopentenyl diphosphate biosynthesis via DXP pathway; isopentenyl diphosphate from 1-deoxy-D-xylulose 5-phosphate: step 3/6.</text>
</comment>
<comment type="similarity">
    <text evidence="1">Belongs to the GHMP kinase family. IspE subfamily.</text>
</comment>
<gene>
    <name evidence="1" type="primary">ispE</name>
    <name type="ordered locus">Sala_1187</name>
</gene>
<accession>Q1GTW9</accession>
<reference key="1">
    <citation type="journal article" date="2009" name="Proc. Natl. Acad. Sci. U.S.A.">
        <title>The genomic basis of trophic strategy in marine bacteria.</title>
        <authorList>
            <person name="Lauro F.M."/>
            <person name="McDougald D."/>
            <person name="Thomas T."/>
            <person name="Williams T.J."/>
            <person name="Egan S."/>
            <person name="Rice S."/>
            <person name="DeMaere M.Z."/>
            <person name="Ting L."/>
            <person name="Ertan H."/>
            <person name="Johnson J."/>
            <person name="Ferriera S."/>
            <person name="Lapidus A."/>
            <person name="Anderson I."/>
            <person name="Kyrpides N."/>
            <person name="Munk A.C."/>
            <person name="Detter C."/>
            <person name="Han C.S."/>
            <person name="Brown M.V."/>
            <person name="Robb F.T."/>
            <person name="Kjelleberg S."/>
            <person name="Cavicchioli R."/>
        </authorList>
    </citation>
    <scope>NUCLEOTIDE SEQUENCE [LARGE SCALE GENOMIC DNA]</scope>
    <source>
        <strain>DSM 13593 / LMG 18877 / RB2256</strain>
    </source>
</reference>
<protein>
    <recommendedName>
        <fullName evidence="1">4-diphosphocytidyl-2-C-methyl-D-erythritol kinase</fullName>
        <shortName evidence="1">CMK</shortName>
        <ecNumber evidence="1">2.7.1.148</ecNumber>
    </recommendedName>
    <alternativeName>
        <fullName evidence="1">4-(cytidine-5'-diphospho)-2-C-methyl-D-erythritol kinase</fullName>
    </alternativeName>
</protein>
<dbReference type="EC" id="2.7.1.148" evidence="1"/>
<dbReference type="EMBL" id="CP000356">
    <property type="protein sequence ID" value="ABF52903.1"/>
    <property type="molecule type" value="Genomic_DNA"/>
</dbReference>
<dbReference type="RefSeq" id="WP_011541488.1">
    <property type="nucleotide sequence ID" value="NC_008048.1"/>
</dbReference>
<dbReference type="SMR" id="Q1GTW9"/>
<dbReference type="STRING" id="317655.Sala_1187"/>
<dbReference type="KEGG" id="sal:Sala_1187"/>
<dbReference type="eggNOG" id="COG1947">
    <property type="taxonomic scope" value="Bacteria"/>
</dbReference>
<dbReference type="HOGENOM" id="CLU_053057_1_0_5"/>
<dbReference type="OrthoDB" id="9809438at2"/>
<dbReference type="UniPathway" id="UPA00056">
    <property type="reaction ID" value="UER00094"/>
</dbReference>
<dbReference type="Proteomes" id="UP000006578">
    <property type="component" value="Chromosome"/>
</dbReference>
<dbReference type="GO" id="GO:0050515">
    <property type="term" value="F:4-(cytidine 5'-diphospho)-2-C-methyl-D-erythritol kinase activity"/>
    <property type="evidence" value="ECO:0007669"/>
    <property type="project" value="UniProtKB-UniRule"/>
</dbReference>
<dbReference type="GO" id="GO:0005524">
    <property type="term" value="F:ATP binding"/>
    <property type="evidence" value="ECO:0007669"/>
    <property type="project" value="UniProtKB-UniRule"/>
</dbReference>
<dbReference type="GO" id="GO:0019288">
    <property type="term" value="P:isopentenyl diphosphate biosynthetic process, methylerythritol 4-phosphate pathway"/>
    <property type="evidence" value="ECO:0007669"/>
    <property type="project" value="UniProtKB-UniRule"/>
</dbReference>
<dbReference type="GO" id="GO:0016114">
    <property type="term" value="P:terpenoid biosynthetic process"/>
    <property type="evidence" value="ECO:0007669"/>
    <property type="project" value="InterPro"/>
</dbReference>
<dbReference type="Gene3D" id="3.30.230.10">
    <property type="match status" value="1"/>
</dbReference>
<dbReference type="Gene3D" id="3.30.70.890">
    <property type="entry name" value="GHMP kinase, C-terminal domain"/>
    <property type="match status" value="1"/>
</dbReference>
<dbReference type="HAMAP" id="MF_00061">
    <property type="entry name" value="IspE"/>
    <property type="match status" value="1"/>
</dbReference>
<dbReference type="InterPro" id="IPR013750">
    <property type="entry name" value="GHMP_kinase_C_dom"/>
</dbReference>
<dbReference type="InterPro" id="IPR036554">
    <property type="entry name" value="GHMP_kinase_C_sf"/>
</dbReference>
<dbReference type="InterPro" id="IPR006204">
    <property type="entry name" value="GHMP_kinase_N_dom"/>
</dbReference>
<dbReference type="InterPro" id="IPR004424">
    <property type="entry name" value="IspE"/>
</dbReference>
<dbReference type="InterPro" id="IPR020568">
    <property type="entry name" value="Ribosomal_Su5_D2-typ_SF"/>
</dbReference>
<dbReference type="InterPro" id="IPR014721">
    <property type="entry name" value="Ribsml_uS5_D2-typ_fold_subgr"/>
</dbReference>
<dbReference type="NCBIfam" id="NF011202">
    <property type="entry name" value="PRK14608.1"/>
    <property type="match status" value="1"/>
</dbReference>
<dbReference type="PANTHER" id="PTHR43527">
    <property type="entry name" value="4-DIPHOSPHOCYTIDYL-2-C-METHYL-D-ERYTHRITOL KINASE, CHLOROPLASTIC"/>
    <property type="match status" value="1"/>
</dbReference>
<dbReference type="PANTHER" id="PTHR43527:SF2">
    <property type="entry name" value="4-DIPHOSPHOCYTIDYL-2-C-METHYL-D-ERYTHRITOL KINASE, CHLOROPLASTIC"/>
    <property type="match status" value="1"/>
</dbReference>
<dbReference type="Pfam" id="PF08544">
    <property type="entry name" value="GHMP_kinases_C"/>
    <property type="match status" value="1"/>
</dbReference>
<dbReference type="Pfam" id="PF00288">
    <property type="entry name" value="GHMP_kinases_N"/>
    <property type="match status" value="1"/>
</dbReference>
<dbReference type="PIRSF" id="PIRSF010376">
    <property type="entry name" value="IspE"/>
    <property type="match status" value="1"/>
</dbReference>
<dbReference type="SUPFAM" id="SSF55060">
    <property type="entry name" value="GHMP Kinase, C-terminal domain"/>
    <property type="match status" value="1"/>
</dbReference>
<dbReference type="SUPFAM" id="SSF54211">
    <property type="entry name" value="Ribosomal protein S5 domain 2-like"/>
    <property type="match status" value="1"/>
</dbReference>
<proteinExistence type="inferred from homology"/>
<keyword id="KW-0067">ATP-binding</keyword>
<keyword id="KW-0414">Isoprene biosynthesis</keyword>
<keyword id="KW-0418">Kinase</keyword>
<keyword id="KW-0547">Nucleotide-binding</keyword>
<keyword id="KW-1185">Reference proteome</keyword>
<keyword id="KW-0808">Transferase</keyword>
<evidence type="ECO:0000255" key="1">
    <source>
        <dbReference type="HAMAP-Rule" id="MF_00061"/>
    </source>
</evidence>
<organism>
    <name type="scientific">Sphingopyxis alaskensis (strain DSM 13593 / LMG 18877 / RB2256)</name>
    <name type="common">Sphingomonas alaskensis</name>
    <dbReference type="NCBI Taxonomy" id="317655"/>
    <lineage>
        <taxon>Bacteria</taxon>
        <taxon>Pseudomonadati</taxon>
        <taxon>Pseudomonadota</taxon>
        <taxon>Alphaproteobacteria</taxon>
        <taxon>Sphingomonadales</taxon>
        <taxon>Sphingomonadaceae</taxon>
        <taxon>Sphingopyxis</taxon>
    </lineage>
</organism>
<feature type="chain" id="PRO_0000335760" description="4-diphosphocytidyl-2-C-methyl-D-erythritol kinase">
    <location>
        <begin position="1"/>
        <end position="283"/>
    </location>
</feature>
<feature type="active site" evidence="1">
    <location>
        <position position="12"/>
    </location>
</feature>
<feature type="active site" evidence="1">
    <location>
        <position position="141"/>
    </location>
</feature>
<feature type="binding site" evidence="1">
    <location>
        <begin position="99"/>
        <end position="109"/>
    </location>
    <ligand>
        <name>ATP</name>
        <dbReference type="ChEBI" id="CHEBI:30616"/>
    </ligand>
</feature>
<sequence length="283" mass="29450">MSATMRETGWAKINLALHVRARRADGYHDIETLFAFVDGGDTIEAALAATDTLVIDGEFAEGLSSGADNLVLRVLALLRARYGADRVPPLAVRLTKRLPLAAGIGGGSADAAAMARLVRTHFLPELGDATLARIVGPLGADIAACVASTTCMGSGTGEDLHAVAGLRIAGVPVLLVNPRQPVATGPVFAAWDGIDRGPLYIGTDYRAQLIGARNDLQRPALAACPAISDILLELGALRPWLARMSGSGATCFALFDAAADRDAAKAVLAARHPGWWLMAGALR</sequence>
<name>ISPE_SPHAL</name>